<feature type="chain" id="PRO_0000143530" description="Maturase K">
    <location>
        <begin position="1"/>
        <end position="511"/>
    </location>
</feature>
<keyword id="KW-0150">Chloroplast</keyword>
<keyword id="KW-0507">mRNA processing</keyword>
<keyword id="KW-0934">Plastid</keyword>
<keyword id="KW-0694">RNA-binding</keyword>
<keyword id="KW-0819">tRNA processing</keyword>
<name>MATK_NARST</name>
<protein>
    <recommendedName>
        <fullName evidence="1">Maturase K</fullName>
    </recommendedName>
    <alternativeName>
        <fullName evidence="1">Intron maturase</fullName>
    </alternativeName>
</protein>
<evidence type="ECO:0000255" key="1">
    <source>
        <dbReference type="HAMAP-Rule" id="MF_01390"/>
    </source>
</evidence>
<gene>
    <name evidence="1" type="primary">matK</name>
</gene>
<reference key="1">
    <citation type="journal article" date="1999" name="Ann. Mo. Bot. Gard.">
        <title>Phylogeny of Poaceae inferred from matK sequences.</title>
        <authorList>
            <person name="Hilu K.W."/>
            <person name="Alice L.A."/>
            <person name="Liang H."/>
        </authorList>
    </citation>
    <scope>NUCLEOTIDE SEQUENCE [GENOMIC DNA]</scope>
</reference>
<organism>
    <name type="scientific">Nardus stricta</name>
    <name type="common">Mat-grass</name>
    <dbReference type="NCBI Taxonomy" id="29687"/>
    <lineage>
        <taxon>Eukaryota</taxon>
        <taxon>Viridiplantae</taxon>
        <taxon>Streptophyta</taxon>
        <taxon>Embryophyta</taxon>
        <taxon>Tracheophyta</taxon>
        <taxon>Spermatophyta</taxon>
        <taxon>Magnoliopsida</taxon>
        <taxon>Liliopsida</taxon>
        <taxon>Poales</taxon>
        <taxon>Poaceae</taxon>
        <taxon>BOP clade</taxon>
        <taxon>Pooideae</taxon>
        <taxon>Nardodae</taxon>
        <taxon>Nardeae</taxon>
        <taxon>Nardus</taxon>
    </lineage>
</organism>
<accession>Q9MUZ7</accession>
<comment type="function">
    <text evidence="1">Usually encoded in the trnK tRNA gene intron. Probably assists in splicing its own and other chloroplast group II introns.</text>
</comment>
<comment type="subcellular location">
    <subcellularLocation>
        <location>Plastid</location>
        <location>Chloroplast</location>
    </subcellularLocation>
</comment>
<comment type="similarity">
    <text evidence="1">Belongs to the intron maturase 2 family. MatK subfamily.</text>
</comment>
<proteinExistence type="inferred from homology"/>
<geneLocation type="chloroplast"/>
<sequence length="511" mass="61454">MEKFEGYSKKHKFRHQYFVYPLLFQEYIYAFAHDYGLKGSESVEIISCNNKKFSSLLVKRLIIRMYQQNFWINSVNHPNQDRLLDYNNYFYSEFYSQILSEGFAIVVEIPFSLRELSCSKEKEIPKFQNLRSIHSIFPFLEDKFLHLDYLSHIEIPYPIHLEILVQLLQYRLQDVPSLHFLRFFLNYYSNWNSLITSMKSIFLLKKENKRLFRFLYNSYVSEYEFFLLFLRKQSSRLPLTSSGTFLERIHFCTKMEHFGVRYPGFFRKTIWFFMDPLMHYVRYQGKAILASKGARFLRKKWKCYLVNFWQYSFSFWIQPRRIQLNKLANSCFDFLGYLSSVPQSPLLVRNQMLENSFLITTRIKKFDTIAPAISLIGSLSKAQFCTGSGHPISKPIWTDLSDWDILDRFGRICRNLFHYHSGSSKKQTLYRVKYILRLSCARTLARKHKSTVRTFMQRLGSVFLEEFFTEEEQVFSLMFTKTTHFSFRGSHSERIWYFDILRINDLVKPFN</sequence>
<dbReference type="EMBL" id="AF164394">
    <property type="protein sequence ID" value="AAF66181.1"/>
    <property type="molecule type" value="Genomic_DNA"/>
</dbReference>
<dbReference type="RefSeq" id="YP_009451666.1">
    <property type="nucleotide sequence ID" value="NC_036695.1"/>
</dbReference>
<dbReference type="GeneID" id="35450321"/>
<dbReference type="GO" id="GO:0009507">
    <property type="term" value="C:chloroplast"/>
    <property type="evidence" value="ECO:0007669"/>
    <property type="project" value="UniProtKB-SubCell"/>
</dbReference>
<dbReference type="GO" id="GO:0003723">
    <property type="term" value="F:RNA binding"/>
    <property type="evidence" value="ECO:0007669"/>
    <property type="project" value="UniProtKB-KW"/>
</dbReference>
<dbReference type="GO" id="GO:0006397">
    <property type="term" value="P:mRNA processing"/>
    <property type="evidence" value="ECO:0007669"/>
    <property type="project" value="UniProtKB-KW"/>
</dbReference>
<dbReference type="GO" id="GO:0008380">
    <property type="term" value="P:RNA splicing"/>
    <property type="evidence" value="ECO:0007669"/>
    <property type="project" value="UniProtKB-UniRule"/>
</dbReference>
<dbReference type="GO" id="GO:0008033">
    <property type="term" value="P:tRNA processing"/>
    <property type="evidence" value="ECO:0007669"/>
    <property type="project" value="UniProtKB-KW"/>
</dbReference>
<dbReference type="HAMAP" id="MF_01390">
    <property type="entry name" value="MatK"/>
    <property type="match status" value="1"/>
</dbReference>
<dbReference type="InterPro" id="IPR024937">
    <property type="entry name" value="Domain_X"/>
</dbReference>
<dbReference type="InterPro" id="IPR002866">
    <property type="entry name" value="Maturase_MatK"/>
</dbReference>
<dbReference type="InterPro" id="IPR024942">
    <property type="entry name" value="Maturase_MatK_N"/>
</dbReference>
<dbReference type="PANTHER" id="PTHR34811">
    <property type="entry name" value="MATURASE K"/>
    <property type="match status" value="1"/>
</dbReference>
<dbReference type="PANTHER" id="PTHR34811:SF1">
    <property type="entry name" value="MATURASE K"/>
    <property type="match status" value="1"/>
</dbReference>
<dbReference type="Pfam" id="PF01348">
    <property type="entry name" value="Intron_maturas2"/>
    <property type="match status" value="1"/>
</dbReference>
<dbReference type="Pfam" id="PF01824">
    <property type="entry name" value="MatK_N"/>
    <property type="match status" value="1"/>
</dbReference>